<keyword id="KW-0963">Cytoplasm</keyword>
<keyword id="KW-0342">GTP-binding</keyword>
<keyword id="KW-0396">Initiation factor</keyword>
<keyword id="KW-0547">Nucleotide-binding</keyword>
<keyword id="KW-0648">Protein biosynthesis</keyword>
<comment type="function">
    <text evidence="2">One of the essential components for the initiation of protein synthesis. Protects formylmethionyl-tRNA from spontaneous hydrolysis and promotes its binding to the 30S ribosomal subunits. Also involved in the hydrolysis of GTP during the formation of the 70S ribosomal complex.</text>
</comment>
<comment type="subcellular location">
    <subcellularLocation>
        <location evidence="2">Cytoplasm</location>
    </subcellularLocation>
</comment>
<comment type="similarity">
    <text evidence="2">Belongs to the TRAFAC class translation factor GTPase superfamily. Classic translation factor GTPase family. IF-2 subfamily.</text>
</comment>
<evidence type="ECO:0000250" key="1"/>
<evidence type="ECO:0000255" key="2">
    <source>
        <dbReference type="HAMAP-Rule" id="MF_00100"/>
    </source>
</evidence>
<evidence type="ECO:0000256" key="3">
    <source>
        <dbReference type="SAM" id="MobiDB-lite"/>
    </source>
</evidence>
<protein>
    <recommendedName>
        <fullName evidence="2">Translation initiation factor IF-2</fullName>
    </recommendedName>
</protein>
<organism>
    <name type="scientific">Pseudarthrobacter chlorophenolicus (strain ATCC 700700 / DSM 12829 / CIP 107037 / JCM 12360 / KCTC 9906 / NCIMB 13794 / A6)</name>
    <name type="common">Arthrobacter chlorophenolicus</name>
    <dbReference type="NCBI Taxonomy" id="452863"/>
    <lineage>
        <taxon>Bacteria</taxon>
        <taxon>Bacillati</taxon>
        <taxon>Actinomycetota</taxon>
        <taxon>Actinomycetes</taxon>
        <taxon>Micrococcales</taxon>
        <taxon>Micrococcaceae</taxon>
        <taxon>Pseudarthrobacter</taxon>
    </lineage>
</organism>
<dbReference type="EMBL" id="CP001341">
    <property type="protein sequence ID" value="ACL39416.1"/>
    <property type="molecule type" value="Genomic_DNA"/>
</dbReference>
<dbReference type="RefSeq" id="WP_015936639.1">
    <property type="nucleotide sequence ID" value="NC_011886.1"/>
</dbReference>
<dbReference type="SMR" id="B8HG54"/>
<dbReference type="STRING" id="452863.Achl_1426"/>
<dbReference type="KEGG" id="ach:Achl_1426"/>
<dbReference type="eggNOG" id="COG0532">
    <property type="taxonomic scope" value="Bacteria"/>
</dbReference>
<dbReference type="HOGENOM" id="CLU_006301_9_1_11"/>
<dbReference type="OrthoDB" id="9811804at2"/>
<dbReference type="Proteomes" id="UP000002505">
    <property type="component" value="Chromosome"/>
</dbReference>
<dbReference type="GO" id="GO:0005829">
    <property type="term" value="C:cytosol"/>
    <property type="evidence" value="ECO:0007669"/>
    <property type="project" value="TreeGrafter"/>
</dbReference>
<dbReference type="GO" id="GO:0005525">
    <property type="term" value="F:GTP binding"/>
    <property type="evidence" value="ECO:0007669"/>
    <property type="project" value="UniProtKB-KW"/>
</dbReference>
<dbReference type="GO" id="GO:0003924">
    <property type="term" value="F:GTPase activity"/>
    <property type="evidence" value="ECO:0007669"/>
    <property type="project" value="UniProtKB-UniRule"/>
</dbReference>
<dbReference type="GO" id="GO:0003743">
    <property type="term" value="F:translation initiation factor activity"/>
    <property type="evidence" value="ECO:0007669"/>
    <property type="project" value="UniProtKB-UniRule"/>
</dbReference>
<dbReference type="CDD" id="cd01887">
    <property type="entry name" value="IF2_eIF5B"/>
    <property type="match status" value="1"/>
</dbReference>
<dbReference type="CDD" id="cd03702">
    <property type="entry name" value="IF2_mtIF2_II"/>
    <property type="match status" value="1"/>
</dbReference>
<dbReference type="CDD" id="cd03692">
    <property type="entry name" value="mtIF2_IVc"/>
    <property type="match status" value="1"/>
</dbReference>
<dbReference type="FunFam" id="1.10.10.2480:FF:000003">
    <property type="entry name" value="Translation initiation factor IF-2"/>
    <property type="match status" value="1"/>
</dbReference>
<dbReference type="FunFam" id="2.40.30.10:FF:000007">
    <property type="entry name" value="Translation initiation factor IF-2"/>
    <property type="match status" value="1"/>
</dbReference>
<dbReference type="FunFam" id="2.40.30.10:FF:000008">
    <property type="entry name" value="Translation initiation factor IF-2"/>
    <property type="match status" value="1"/>
</dbReference>
<dbReference type="FunFam" id="3.40.50.10050:FF:000001">
    <property type="entry name" value="Translation initiation factor IF-2"/>
    <property type="match status" value="1"/>
</dbReference>
<dbReference type="FunFam" id="3.40.50.300:FF:000019">
    <property type="entry name" value="Translation initiation factor IF-2"/>
    <property type="match status" value="1"/>
</dbReference>
<dbReference type="Gene3D" id="1.10.10.2480">
    <property type="match status" value="1"/>
</dbReference>
<dbReference type="Gene3D" id="3.40.50.300">
    <property type="entry name" value="P-loop containing nucleotide triphosphate hydrolases"/>
    <property type="match status" value="1"/>
</dbReference>
<dbReference type="Gene3D" id="2.40.30.10">
    <property type="entry name" value="Translation factors"/>
    <property type="match status" value="2"/>
</dbReference>
<dbReference type="Gene3D" id="3.40.50.10050">
    <property type="entry name" value="Translation initiation factor IF- 2, domain 3"/>
    <property type="match status" value="1"/>
</dbReference>
<dbReference type="HAMAP" id="MF_00100_B">
    <property type="entry name" value="IF_2_B"/>
    <property type="match status" value="1"/>
</dbReference>
<dbReference type="InterPro" id="IPR053905">
    <property type="entry name" value="EF-G-like_DII"/>
</dbReference>
<dbReference type="InterPro" id="IPR044145">
    <property type="entry name" value="IF2_II"/>
</dbReference>
<dbReference type="InterPro" id="IPR006847">
    <property type="entry name" value="IF2_N"/>
</dbReference>
<dbReference type="InterPro" id="IPR027417">
    <property type="entry name" value="P-loop_NTPase"/>
</dbReference>
<dbReference type="InterPro" id="IPR005225">
    <property type="entry name" value="Small_GTP-bd"/>
</dbReference>
<dbReference type="InterPro" id="IPR000795">
    <property type="entry name" value="T_Tr_GTP-bd_dom"/>
</dbReference>
<dbReference type="InterPro" id="IPR000178">
    <property type="entry name" value="TF_IF2_bacterial-like"/>
</dbReference>
<dbReference type="InterPro" id="IPR015760">
    <property type="entry name" value="TIF_IF2"/>
</dbReference>
<dbReference type="InterPro" id="IPR023115">
    <property type="entry name" value="TIF_IF2_dom3"/>
</dbReference>
<dbReference type="InterPro" id="IPR036925">
    <property type="entry name" value="TIF_IF2_dom3_sf"/>
</dbReference>
<dbReference type="InterPro" id="IPR009000">
    <property type="entry name" value="Transl_B-barrel_sf"/>
</dbReference>
<dbReference type="NCBIfam" id="TIGR00487">
    <property type="entry name" value="IF-2"/>
    <property type="match status" value="1"/>
</dbReference>
<dbReference type="NCBIfam" id="TIGR00231">
    <property type="entry name" value="small_GTP"/>
    <property type="match status" value="1"/>
</dbReference>
<dbReference type="PANTHER" id="PTHR43381:SF5">
    <property type="entry name" value="TR-TYPE G DOMAIN-CONTAINING PROTEIN"/>
    <property type="match status" value="1"/>
</dbReference>
<dbReference type="PANTHER" id="PTHR43381">
    <property type="entry name" value="TRANSLATION INITIATION FACTOR IF-2-RELATED"/>
    <property type="match status" value="1"/>
</dbReference>
<dbReference type="Pfam" id="PF22042">
    <property type="entry name" value="EF-G_D2"/>
    <property type="match status" value="1"/>
</dbReference>
<dbReference type="Pfam" id="PF00009">
    <property type="entry name" value="GTP_EFTU"/>
    <property type="match status" value="1"/>
</dbReference>
<dbReference type="Pfam" id="PF11987">
    <property type="entry name" value="IF-2"/>
    <property type="match status" value="1"/>
</dbReference>
<dbReference type="Pfam" id="PF04760">
    <property type="entry name" value="IF2_N"/>
    <property type="match status" value="2"/>
</dbReference>
<dbReference type="PRINTS" id="PR00315">
    <property type="entry name" value="ELONGATNFCT"/>
</dbReference>
<dbReference type="SUPFAM" id="SSF52156">
    <property type="entry name" value="Initiation factor IF2/eIF5b, domain 3"/>
    <property type="match status" value="1"/>
</dbReference>
<dbReference type="SUPFAM" id="SSF52540">
    <property type="entry name" value="P-loop containing nucleoside triphosphate hydrolases"/>
    <property type="match status" value="1"/>
</dbReference>
<dbReference type="SUPFAM" id="SSF50447">
    <property type="entry name" value="Translation proteins"/>
    <property type="match status" value="2"/>
</dbReference>
<dbReference type="PROSITE" id="PS51722">
    <property type="entry name" value="G_TR_2"/>
    <property type="match status" value="1"/>
</dbReference>
<dbReference type="PROSITE" id="PS01176">
    <property type="entry name" value="IF2"/>
    <property type="match status" value="1"/>
</dbReference>
<sequence length="954" mass="98635">MAKVRVHELAKELGITSKDAVTKLQELGEFVRSASSTIEAPVVRKLRNAFPDAANKAAAPAAPKAPAPAAESRPAAPAPGPAAPKAPAPKVEAPAPAAPAASAPAAPQASSAAPAAPSTGAKPGARPGPKAETPAPAPRQGGSSQGSSAPRPGGPRPGNNPFATSQGMPRGRGGDGDRAPRPGNNPFATSQGMPRPGRSDGERPGGPRPAAGAGGPRPGGPRPAPGAGGPRPAAGAGGPRPGAPRPGGPRPTPGMMPNRTERPAPAGAGRPGGGGRGPGRPGAPGTGGPGGGGGAPAGGGFGKGGRGRGGTQGAFGKGGAGRGKQRKSKRAKRQELEQMSAPSLGGVSVPRGDGNTVIRLRRGSSITDFADKIEANPAALVTVLFHLGEMATATQSLDEDTFALLGEELGYKLQVVSPEDEERELLSTFDIDVEAELEAEGDEELEPRAPVVTVMGHVDHGKTRLLDAIRNSDVVAGEHGGITQHIGAYQISHEHEGVERDITFIDTPGHEAFTAMRARGAKVTDIAILVVAADDGVMPQTVEALNHAQAANVPIVVAVNKIDKEGANPDKVKGQLTEYGLVPEEYGGDTMFVEVSARQNLNINELIDAVLLTADAALDLRANPDKAARGIAIEANLDKGRGAVATVLVQSGTLAVGDTIVAGTAHGRVRAMFDEDGQALDVALPSRPVQVLGLSNVPRAGDTFLVTSDERTARQIAEKREAADRNAQLAKRRKRISLEDFDQAVADGKIDTLNLILKGDVSGAVEALEDALLKIDVGEGVQLRVIHRGVGAITQNDVNLATVDSAVIIGFNVKPAERVADLADREGVDMRFYSVIYAAIDDIEAALKGMLKPEYEEFQLGTAEVREVFRSSKFGNIAGSIVRSGIIRRNTKARISRDGKIIGDNLTIETLKRFKDDATEVRTDFECGIGLGSYNDITEGDIIETFEMREKPRV</sequence>
<accession>B8HG54</accession>
<proteinExistence type="inferred from homology"/>
<feature type="chain" id="PRO_1000118745" description="Translation initiation factor IF-2">
    <location>
        <begin position="1"/>
        <end position="954"/>
    </location>
</feature>
<feature type="domain" description="tr-type G">
    <location>
        <begin position="447"/>
        <end position="618"/>
    </location>
</feature>
<feature type="region of interest" description="Disordered" evidence="3">
    <location>
        <begin position="56"/>
        <end position="355"/>
    </location>
</feature>
<feature type="region of interest" description="G1" evidence="1">
    <location>
        <begin position="456"/>
        <end position="463"/>
    </location>
</feature>
<feature type="region of interest" description="G2" evidence="1">
    <location>
        <begin position="481"/>
        <end position="485"/>
    </location>
</feature>
<feature type="region of interest" description="G3" evidence="1">
    <location>
        <begin position="506"/>
        <end position="509"/>
    </location>
</feature>
<feature type="region of interest" description="G4" evidence="1">
    <location>
        <begin position="560"/>
        <end position="563"/>
    </location>
</feature>
<feature type="region of interest" description="G5" evidence="1">
    <location>
        <begin position="596"/>
        <end position="598"/>
    </location>
</feature>
<feature type="compositionally biased region" description="Low complexity" evidence="3">
    <location>
        <begin position="56"/>
        <end position="75"/>
    </location>
</feature>
<feature type="compositionally biased region" description="Pro residues" evidence="3">
    <location>
        <begin position="76"/>
        <end position="87"/>
    </location>
</feature>
<feature type="compositionally biased region" description="Low complexity" evidence="3">
    <location>
        <begin position="88"/>
        <end position="125"/>
    </location>
</feature>
<feature type="compositionally biased region" description="Low complexity" evidence="3">
    <location>
        <begin position="138"/>
        <end position="151"/>
    </location>
</feature>
<feature type="compositionally biased region" description="Pro residues" evidence="3">
    <location>
        <begin position="241"/>
        <end position="254"/>
    </location>
</feature>
<feature type="compositionally biased region" description="Gly residues" evidence="3">
    <location>
        <begin position="269"/>
        <end position="322"/>
    </location>
</feature>
<feature type="compositionally biased region" description="Basic residues" evidence="3">
    <location>
        <begin position="323"/>
        <end position="332"/>
    </location>
</feature>
<feature type="binding site" evidence="2">
    <location>
        <begin position="456"/>
        <end position="463"/>
    </location>
    <ligand>
        <name>GTP</name>
        <dbReference type="ChEBI" id="CHEBI:37565"/>
    </ligand>
</feature>
<feature type="binding site" evidence="2">
    <location>
        <begin position="506"/>
        <end position="510"/>
    </location>
    <ligand>
        <name>GTP</name>
        <dbReference type="ChEBI" id="CHEBI:37565"/>
    </ligand>
</feature>
<feature type="binding site" evidence="2">
    <location>
        <begin position="560"/>
        <end position="563"/>
    </location>
    <ligand>
        <name>GTP</name>
        <dbReference type="ChEBI" id="CHEBI:37565"/>
    </ligand>
</feature>
<reference key="1">
    <citation type="submission" date="2009-01" db="EMBL/GenBank/DDBJ databases">
        <title>Complete sequence of chromosome of Arthrobacter chlorophenolicus A6.</title>
        <authorList>
            <consortium name="US DOE Joint Genome Institute"/>
            <person name="Lucas S."/>
            <person name="Copeland A."/>
            <person name="Lapidus A."/>
            <person name="Glavina del Rio T."/>
            <person name="Tice H."/>
            <person name="Bruce D."/>
            <person name="Goodwin L."/>
            <person name="Pitluck S."/>
            <person name="Goltsman E."/>
            <person name="Clum A."/>
            <person name="Larimer F."/>
            <person name="Land M."/>
            <person name="Hauser L."/>
            <person name="Kyrpides N."/>
            <person name="Mikhailova N."/>
            <person name="Jansson J."/>
            <person name="Richardson P."/>
        </authorList>
    </citation>
    <scope>NUCLEOTIDE SEQUENCE [LARGE SCALE GENOMIC DNA]</scope>
    <source>
        <strain>ATCC 700700 / DSM 12829 / CIP 107037 / JCM 12360 / KCTC 9906 / NCIMB 13794 / A6</strain>
    </source>
</reference>
<gene>
    <name evidence="2" type="primary">infB</name>
    <name type="ordered locus">Achl_1426</name>
</gene>
<name>IF2_PSECP</name>